<name>PSBX_PROM2</name>
<gene>
    <name evidence="1" type="primary">psbX</name>
    <name type="ordered locus">P9215_00741</name>
</gene>
<evidence type="ECO:0000255" key="1">
    <source>
        <dbReference type="HAMAP-Rule" id="MF_01388"/>
    </source>
</evidence>
<organism>
    <name type="scientific">Prochlorococcus marinus (strain MIT 9215)</name>
    <dbReference type="NCBI Taxonomy" id="93060"/>
    <lineage>
        <taxon>Bacteria</taxon>
        <taxon>Bacillati</taxon>
        <taxon>Cyanobacteriota</taxon>
        <taxon>Cyanophyceae</taxon>
        <taxon>Synechococcales</taxon>
        <taxon>Prochlorococcaceae</taxon>
        <taxon>Prochlorococcus</taxon>
    </lineage>
</organism>
<sequence length="61" mass="6362">MLQISNLLLVADVSAQAANNSAVGMIGSFIAAALLIVIPATAFLIFVSQNDSLERTSTGRR</sequence>
<reference key="1">
    <citation type="journal article" date="2007" name="PLoS Genet.">
        <title>Patterns and implications of gene gain and loss in the evolution of Prochlorococcus.</title>
        <authorList>
            <person name="Kettler G.C."/>
            <person name="Martiny A.C."/>
            <person name="Huang K."/>
            <person name="Zucker J."/>
            <person name="Coleman M.L."/>
            <person name="Rodrigue S."/>
            <person name="Chen F."/>
            <person name="Lapidus A."/>
            <person name="Ferriera S."/>
            <person name="Johnson J."/>
            <person name="Steglich C."/>
            <person name="Church G.M."/>
            <person name="Richardson P."/>
            <person name="Chisholm S.W."/>
        </authorList>
    </citation>
    <scope>NUCLEOTIDE SEQUENCE [LARGE SCALE GENOMIC DNA]</scope>
    <source>
        <strain>MIT 9215</strain>
    </source>
</reference>
<proteinExistence type="inferred from homology"/>
<protein>
    <recommendedName>
        <fullName evidence="1">Photosystem II reaction center X protein</fullName>
    </recommendedName>
</protein>
<comment type="function">
    <text evidence="1">Involved in the binding and/or turnover of quinones at the Q(B) site of Photosystem II.</text>
</comment>
<comment type="subunit">
    <text evidence="1">PSII consists of a core antenna complex that captures photons, and an electron transfer chain that converts photonic excitation into a charge separation. PSII forms dimeric complexes.</text>
</comment>
<comment type="subcellular location">
    <subcellularLocation>
        <location evidence="1">Cellular thylakoid membrane</location>
        <topology evidence="1">Single-pass membrane protein</topology>
    </subcellularLocation>
</comment>
<comment type="similarity">
    <text evidence="1">Belongs to the PsbX family. Type 2 subfamily.</text>
</comment>
<feature type="chain" id="PRO_0000345370" description="Photosystem II reaction center X protein">
    <location>
        <begin position="1"/>
        <end position="61"/>
    </location>
</feature>
<feature type="transmembrane region" description="Helical" evidence="1">
    <location>
        <begin position="26"/>
        <end position="46"/>
    </location>
</feature>
<dbReference type="EMBL" id="CP000825">
    <property type="protein sequence ID" value="ABV49693.1"/>
    <property type="molecule type" value="Genomic_DNA"/>
</dbReference>
<dbReference type="RefSeq" id="WP_002807038.1">
    <property type="nucleotide sequence ID" value="NC_009840.1"/>
</dbReference>
<dbReference type="SMR" id="A8G262"/>
<dbReference type="STRING" id="93060.P9215_00741"/>
<dbReference type="KEGG" id="pmh:P9215_00741"/>
<dbReference type="HOGENOM" id="CLU_209178_0_0_3"/>
<dbReference type="OrthoDB" id="541645at2"/>
<dbReference type="Proteomes" id="UP000002014">
    <property type="component" value="Chromosome"/>
</dbReference>
<dbReference type="GO" id="GO:0009523">
    <property type="term" value="C:photosystem II"/>
    <property type="evidence" value="ECO:0007669"/>
    <property type="project" value="UniProtKB-KW"/>
</dbReference>
<dbReference type="GO" id="GO:0031676">
    <property type="term" value="C:plasma membrane-derived thylakoid membrane"/>
    <property type="evidence" value="ECO:0007669"/>
    <property type="project" value="UniProtKB-SubCell"/>
</dbReference>
<dbReference type="GO" id="GO:0015979">
    <property type="term" value="P:photosynthesis"/>
    <property type="evidence" value="ECO:0007669"/>
    <property type="project" value="UniProtKB-KW"/>
</dbReference>
<dbReference type="HAMAP" id="MF_01388">
    <property type="entry name" value="PSII_PsbX_2"/>
    <property type="match status" value="1"/>
</dbReference>
<dbReference type="InterPro" id="IPR009518">
    <property type="entry name" value="PSII_PsbX"/>
</dbReference>
<dbReference type="InterPro" id="IPR023428">
    <property type="entry name" value="PSII_PsbX_type_2_subfam"/>
</dbReference>
<dbReference type="Pfam" id="PF06596">
    <property type="entry name" value="PsbX"/>
    <property type="match status" value="1"/>
</dbReference>
<accession>A8G262</accession>
<keyword id="KW-0472">Membrane</keyword>
<keyword id="KW-0602">Photosynthesis</keyword>
<keyword id="KW-0604">Photosystem II</keyword>
<keyword id="KW-0793">Thylakoid</keyword>
<keyword id="KW-0812">Transmembrane</keyword>
<keyword id="KW-1133">Transmembrane helix</keyword>